<feature type="chain" id="PRO_0000364551" description="Fructose-1,6-bisphosphatase class 1">
    <location>
        <begin position="1"/>
        <end position="332"/>
    </location>
</feature>
<feature type="binding site" evidence="1">
    <location>
        <position position="89"/>
    </location>
    <ligand>
        <name>Mg(2+)</name>
        <dbReference type="ChEBI" id="CHEBI:18420"/>
        <label>1</label>
    </ligand>
</feature>
<feature type="binding site" evidence="1">
    <location>
        <position position="110"/>
    </location>
    <ligand>
        <name>Mg(2+)</name>
        <dbReference type="ChEBI" id="CHEBI:18420"/>
        <label>1</label>
    </ligand>
</feature>
<feature type="binding site" evidence="1">
    <location>
        <position position="110"/>
    </location>
    <ligand>
        <name>Mg(2+)</name>
        <dbReference type="ChEBI" id="CHEBI:18420"/>
        <label>2</label>
    </ligand>
</feature>
<feature type="binding site" evidence="1">
    <location>
        <position position="112"/>
    </location>
    <ligand>
        <name>Mg(2+)</name>
        <dbReference type="ChEBI" id="CHEBI:18420"/>
        <label>1</label>
    </ligand>
</feature>
<feature type="binding site" evidence="1">
    <location>
        <begin position="113"/>
        <end position="116"/>
    </location>
    <ligand>
        <name>substrate</name>
    </ligand>
</feature>
<feature type="binding site" evidence="1">
    <location>
        <position position="113"/>
    </location>
    <ligand>
        <name>Mg(2+)</name>
        <dbReference type="ChEBI" id="CHEBI:18420"/>
        <label>2</label>
    </ligand>
</feature>
<feature type="binding site" evidence="1">
    <location>
        <position position="206"/>
    </location>
    <ligand>
        <name>substrate</name>
    </ligand>
</feature>
<feature type="binding site" evidence="1">
    <location>
        <position position="239"/>
    </location>
    <ligand>
        <name>substrate</name>
    </ligand>
</feature>
<feature type="binding site" evidence="1">
    <location>
        <begin position="257"/>
        <end position="259"/>
    </location>
    <ligand>
        <name>substrate</name>
    </ligand>
</feature>
<feature type="binding site" evidence="1">
    <location>
        <position position="269"/>
    </location>
    <ligand>
        <name>substrate</name>
    </ligand>
</feature>
<feature type="binding site" evidence="1">
    <location>
        <position position="275"/>
    </location>
    <ligand>
        <name>Mg(2+)</name>
        <dbReference type="ChEBI" id="CHEBI:18420"/>
        <label>2</label>
    </ligand>
</feature>
<gene>
    <name evidence="1" type="primary">fbp</name>
    <name type="ordered locus">ECH74115_5751</name>
</gene>
<reference key="1">
    <citation type="journal article" date="2011" name="Proc. Natl. Acad. Sci. U.S.A.">
        <title>Genomic anatomy of Escherichia coli O157:H7 outbreaks.</title>
        <authorList>
            <person name="Eppinger M."/>
            <person name="Mammel M.K."/>
            <person name="Leclerc J.E."/>
            <person name="Ravel J."/>
            <person name="Cebula T.A."/>
        </authorList>
    </citation>
    <scope>NUCLEOTIDE SEQUENCE [LARGE SCALE GENOMIC DNA]</scope>
    <source>
        <strain>EC4115 / EHEC</strain>
    </source>
</reference>
<name>F16PA_ECO5E</name>
<dbReference type="EC" id="3.1.3.11" evidence="1"/>
<dbReference type="EMBL" id="CP001164">
    <property type="protein sequence ID" value="ACI34705.1"/>
    <property type="molecule type" value="Genomic_DNA"/>
</dbReference>
<dbReference type="RefSeq" id="WP_000853749.1">
    <property type="nucleotide sequence ID" value="NC_011353.1"/>
</dbReference>
<dbReference type="SMR" id="B5Z3I7"/>
<dbReference type="KEGG" id="ecf:ECH74115_5751"/>
<dbReference type="HOGENOM" id="CLU_039977_2_2_6"/>
<dbReference type="UniPathway" id="UPA00138"/>
<dbReference type="GO" id="GO:0005829">
    <property type="term" value="C:cytosol"/>
    <property type="evidence" value="ECO:0007669"/>
    <property type="project" value="TreeGrafter"/>
</dbReference>
<dbReference type="GO" id="GO:0042132">
    <property type="term" value="F:fructose 1,6-bisphosphate 1-phosphatase activity"/>
    <property type="evidence" value="ECO:0007669"/>
    <property type="project" value="UniProtKB-UniRule"/>
</dbReference>
<dbReference type="GO" id="GO:0000287">
    <property type="term" value="F:magnesium ion binding"/>
    <property type="evidence" value="ECO:0007669"/>
    <property type="project" value="UniProtKB-UniRule"/>
</dbReference>
<dbReference type="GO" id="GO:0030388">
    <property type="term" value="P:fructose 1,6-bisphosphate metabolic process"/>
    <property type="evidence" value="ECO:0007669"/>
    <property type="project" value="TreeGrafter"/>
</dbReference>
<dbReference type="GO" id="GO:0006002">
    <property type="term" value="P:fructose 6-phosphate metabolic process"/>
    <property type="evidence" value="ECO:0007669"/>
    <property type="project" value="TreeGrafter"/>
</dbReference>
<dbReference type="GO" id="GO:0006000">
    <property type="term" value="P:fructose metabolic process"/>
    <property type="evidence" value="ECO:0007669"/>
    <property type="project" value="TreeGrafter"/>
</dbReference>
<dbReference type="GO" id="GO:0006094">
    <property type="term" value="P:gluconeogenesis"/>
    <property type="evidence" value="ECO:0007669"/>
    <property type="project" value="UniProtKB-UniRule"/>
</dbReference>
<dbReference type="GO" id="GO:0005986">
    <property type="term" value="P:sucrose biosynthetic process"/>
    <property type="evidence" value="ECO:0007669"/>
    <property type="project" value="TreeGrafter"/>
</dbReference>
<dbReference type="CDD" id="cd00354">
    <property type="entry name" value="FBPase"/>
    <property type="match status" value="1"/>
</dbReference>
<dbReference type="FunFam" id="3.30.540.10:FF:000002">
    <property type="entry name" value="Fructose-1,6-bisphosphatase class 1"/>
    <property type="match status" value="1"/>
</dbReference>
<dbReference type="FunFam" id="3.40.190.80:FF:000001">
    <property type="entry name" value="Fructose-1,6-bisphosphatase class 1"/>
    <property type="match status" value="1"/>
</dbReference>
<dbReference type="Gene3D" id="3.40.190.80">
    <property type="match status" value="1"/>
</dbReference>
<dbReference type="Gene3D" id="3.30.540.10">
    <property type="entry name" value="Fructose-1,6-Bisphosphatase, subunit A, domain 1"/>
    <property type="match status" value="1"/>
</dbReference>
<dbReference type="HAMAP" id="MF_01855">
    <property type="entry name" value="FBPase_class1"/>
    <property type="match status" value="1"/>
</dbReference>
<dbReference type="InterPro" id="IPR044015">
    <property type="entry name" value="FBPase_C_dom"/>
</dbReference>
<dbReference type="InterPro" id="IPR000146">
    <property type="entry name" value="FBPase_class-1"/>
</dbReference>
<dbReference type="InterPro" id="IPR033391">
    <property type="entry name" value="FBPase_N"/>
</dbReference>
<dbReference type="InterPro" id="IPR028343">
    <property type="entry name" value="FBPtase"/>
</dbReference>
<dbReference type="InterPro" id="IPR020548">
    <property type="entry name" value="Fructose_bisphosphatase_AS"/>
</dbReference>
<dbReference type="NCBIfam" id="NF006778">
    <property type="entry name" value="PRK09293.1-1"/>
    <property type="match status" value="1"/>
</dbReference>
<dbReference type="PANTHER" id="PTHR11556">
    <property type="entry name" value="FRUCTOSE-1,6-BISPHOSPHATASE-RELATED"/>
    <property type="match status" value="1"/>
</dbReference>
<dbReference type="PANTHER" id="PTHR11556:SF35">
    <property type="entry name" value="SEDOHEPTULOSE-1,7-BISPHOSPHATASE, CHLOROPLASTIC"/>
    <property type="match status" value="1"/>
</dbReference>
<dbReference type="Pfam" id="PF00316">
    <property type="entry name" value="FBPase"/>
    <property type="match status" value="1"/>
</dbReference>
<dbReference type="Pfam" id="PF18913">
    <property type="entry name" value="FBPase_C"/>
    <property type="match status" value="1"/>
</dbReference>
<dbReference type="PIRSF" id="PIRSF500210">
    <property type="entry name" value="FBPtase"/>
    <property type="match status" value="1"/>
</dbReference>
<dbReference type="PIRSF" id="PIRSF000904">
    <property type="entry name" value="FBPtase_SBPase"/>
    <property type="match status" value="1"/>
</dbReference>
<dbReference type="PRINTS" id="PR00115">
    <property type="entry name" value="F16BPHPHTASE"/>
</dbReference>
<dbReference type="SUPFAM" id="SSF56655">
    <property type="entry name" value="Carbohydrate phosphatase"/>
    <property type="match status" value="1"/>
</dbReference>
<dbReference type="PROSITE" id="PS00124">
    <property type="entry name" value="FBPASE"/>
    <property type="match status" value="1"/>
</dbReference>
<organism>
    <name type="scientific">Escherichia coli O157:H7 (strain EC4115 / EHEC)</name>
    <dbReference type="NCBI Taxonomy" id="444450"/>
    <lineage>
        <taxon>Bacteria</taxon>
        <taxon>Pseudomonadati</taxon>
        <taxon>Pseudomonadota</taxon>
        <taxon>Gammaproteobacteria</taxon>
        <taxon>Enterobacterales</taxon>
        <taxon>Enterobacteriaceae</taxon>
        <taxon>Escherichia</taxon>
    </lineage>
</organism>
<evidence type="ECO:0000255" key="1">
    <source>
        <dbReference type="HAMAP-Rule" id="MF_01855"/>
    </source>
</evidence>
<keyword id="KW-0119">Carbohydrate metabolism</keyword>
<keyword id="KW-0963">Cytoplasm</keyword>
<keyword id="KW-0378">Hydrolase</keyword>
<keyword id="KW-0460">Magnesium</keyword>
<keyword id="KW-0479">Metal-binding</keyword>
<comment type="catalytic activity">
    <reaction evidence="1">
        <text>beta-D-fructose 1,6-bisphosphate + H2O = beta-D-fructose 6-phosphate + phosphate</text>
        <dbReference type="Rhea" id="RHEA:11064"/>
        <dbReference type="ChEBI" id="CHEBI:15377"/>
        <dbReference type="ChEBI" id="CHEBI:32966"/>
        <dbReference type="ChEBI" id="CHEBI:43474"/>
        <dbReference type="ChEBI" id="CHEBI:57634"/>
        <dbReference type="EC" id="3.1.3.11"/>
    </reaction>
</comment>
<comment type="cofactor">
    <cofactor evidence="1">
        <name>Mg(2+)</name>
        <dbReference type="ChEBI" id="CHEBI:18420"/>
    </cofactor>
    <text evidence="1">Binds 2 magnesium ions per subunit.</text>
</comment>
<comment type="pathway">
    <text evidence="1">Carbohydrate biosynthesis; gluconeogenesis.</text>
</comment>
<comment type="subunit">
    <text evidence="1">Homotetramer.</text>
</comment>
<comment type="subcellular location">
    <subcellularLocation>
        <location evidence="1">Cytoplasm</location>
    </subcellularLocation>
</comment>
<comment type="similarity">
    <text evidence="1">Belongs to the FBPase class 1 family.</text>
</comment>
<accession>B5Z3I7</accession>
<sequence>MKTLGEFIVEKQHEFSHATGELTALLSAIKLGAKIIHRDINKAGLVDILGASGAENVQGEVQQKLDLFANEKLKAALKARDIVAGIASEEEDEIVVFEGCEHAKYVVLMDPLDGSSNIDVNVSVGTIFSIYRRVTPVGTPVTEEDFLQPGNKQVAAGYVVYGSSTMLVYSTGCGVHAFTYDPSLGVFCLCQERMRFPEKGKTYSINEGNYIKFPNGVKKYIKFCQEEDKSTNRPYTSRYIGSLVADFHRNLLKGGIYLYPSTASHPDGKLRLLYECNPMAFLAEQAGGKASDGKERILDIIPETLHQRRSFFVGNDHMVEDVERFICEFPDA</sequence>
<protein>
    <recommendedName>
        <fullName evidence="1">Fructose-1,6-bisphosphatase class 1</fullName>
        <shortName evidence="1">FBPase class 1</shortName>
        <ecNumber evidence="1">3.1.3.11</ecNumber>
    </recommendedName>
    <alternativeName>
        <fullName evidence="1">D-fructose-1,6-bisphosphate 1-phosphohydrolase class 1</fullName>
    </alternativeName>
</protein>
<proteinExistence type="inferred from homology"/>